<gene>
    <name type="primary">hisF</name>
    <name type="ordered locus">NMB0628</name>
</gene>
<organism>
    <name type="scientific">Neisseria meningitidis serogroup B (strain ATCC BAA-335 / MC58)</name>
    <dbReference type="NCBI Taxonomy" id="122586"/>
    <lineage>
        <taxon>Bacteria</taxon>
        <taxon>Pseudomonadati</taxon>
        <taxon>Pseudomonadota</taxon>
        <taxon>Betaproteobacteria</taxon>
        <taxon>Neisseriales</taxon>
        <taxon>Neisseriaceae</taxon>
        <taxon>Neisseria</taxon>
    </lineage>
</organism>
<protein>
    <recommendedName>
        <fullName>Imidazole glycerol phosphate synthase subunit HisF</fullName>
        <ecNumber>4.3.2.10</ecNumber>
    </recommendedName>
    <alternativeName>
        <fullName>IGP synthase cyclase subunit</fullName>
    </alternativeName>
    <alternativeName>
        <fullName>IGP synthase subunit HisF</fullName>
    </alternativeName>
    <alternativeName>
        <fullName>ImGP synthase subunit HisF</fullName>
        <shortName>IGPS subunit HisF</shortName>
    </alternativeName>
</protein>
<keyword id="KW-0028">Amino-acid biosynthesis</keyword>
<keyword id="KW-0963">Cytoplasm</keyword>
<keyword id="KW-0368">Histidine biosynthesis</keyword>
<keyword id="KW-0456">Lyase</keyword>
<keyword id="KW-1185">Reference proteome</keyword>
<reference key="1">
    <citation type="journal article" date="2000" name="Science">
        <title>Complete genome sequence of Neisseria meningitidis serogroup B strain MC58.</title>
        <authorList>
            <person name="Tettelin H."/>
            <person name="Saunders N.J."/>
            <person name="Heidelberg J.F."/>
            <person name="Jeffries A.C."/>
            <person name="Nelson K.E."/>
            <person name="Eisen J.A."/>
            <person name="Ketchum K.A."/>
            <person name="Hood D.W."/>
            <person name="Peden J.F."/>
            <person name="Dodson R.J."/>
            <person name="Nelson W.C."/>
            <person name="Gwinn M.L."/>
            <person name="DeBoy R.T."/>
            <person name="Peterson J.D."/>
            <person name="Hickey E.K."/>
            <person name="Haft D.H."/>
            <person name="Salzberg S.L."/>
            <person name="White O."/>
            <person name="Fleischmann R.D."/>
            <person name="Dougherty B.A."/>
            <person name="Mason T.M."/>
            <person name="Ciecko A."/>
            <person name="Parksey D.S."/>
            <person name="Blair E."/>
            <person name="Cittone H."/>
            <person name="Clark E.B."/>
            <person name="Cotton M.D."/>
            <person name="Utterback T.R."/>
            <person name="Khouri H.M."/>
            <person name="Qin H."/>
            <person name="Vamathevan J.J."/>
            <person name="Gill J."/>
            <person name="Scarlato V."/>
            <person name="Masignani V."/>
            <person name="Pizza M."/>
            <person name="Grandi G."/>
            <person name="Sun L."/>
            <person name="Smith H.O."/>
            <person name="Fraser C.M."/>
            <person name="Moxon E.R."/>
            <person name="Rappuoli R."/>
            <person name="Venter J.C."/>
        </authorList>
    </citation>
    <scope>NUCLEOTIDE SEQUENCE [LARGE SCALE GENOMIC DNA]</scope>
    <source>
        <strain>ATCC BAA-335 / MC58</strain>
    </source>
</reference>
<accession>Q9K0H4</accession>
<evidence type="ECO:0000250" key="1"/>
<evidence type="ECO:0000255" key="2"/>
<evidence type="ECO:0000305" key="3"/>
<comment type="function">
    <text evidence="1">IGPS catalyzes the conversion of PRFAR and glutamine to IGP, AICAR and glutamate. The HisF subunit catalyzes the cyclization activity that produces IGP and AICAR from PRFAR using the ammonia provided by the HisH subunit (By similarity).</text>
</comment>
<comment type="catalytic activity">
    <reaction>
        <text>5-[(5-phospho-1-deoxy-D-ribulos-1-ylimino)methylamino]-1-(5-phospho-beta-D-ribosyl)imidazole-4-carboxamide + L-glutamine = D-erythro-1-(imidazol-4-yl)glycerol 3-phosphate + 5-amino-1-(5-phospho-beta-D-ribosyl)imidazole-4-carboxamide + L-glutamate + H(+)</text>
        <dbReference type="Rhea" id="RHEA:24793"/>
        <dbReference type="ChEBI" id="CHEBI:15378"/>
        <dbReference type="ChEBI" id="CHEBI:29985"/>
        <dbReference type="ChEBI" id="CHEBI:58278"/>
        <dbReference type="ChEBI" id="CHEBI:58359"/>
        <dbReference type="ChEBI" id="CHEBI:58475"/>
        <dbReference type="ChEBI" id="CHEBI:58525"/>
        <dbReference type="EC" id="4.3.2.10"/>
    </reaction>
</comment>
<comment type="pathway">
    <text>Amino-acid biosynthesis; L-histidine biosynthesis; L-histidine from 5-phospho-alpha-D-ribose 1-diphosphate: step 5/9.</text>
</comment>
<comment type="subunit">
    <text evidence="1">Heterodimer of HisH and HisF.</text>
</comment>
<comment type="subcellular location">
    <subcellularLocation>
        <location evidence="1">Cytoplasm</location>
    </subcellularLocation>
</comment>
<comment type="similarity">
    <text evidence="3">Belongs to the HisA/HisF family.</text>
</comment>
<proteinExistence type="inferred from homology"/>
<name>HIS6_NEIMB</name>
<feature type="chain" id="PRO_0000142188" description="Imidazole glycerol phosphate synthase subunit HisF">
    <location>
        <begin position="1"/>
        <end position="255"/>
    </location>
</feature>
<feature type="active site" evidence="2">
    <location>
        <position position="12"/>
    </location>
</feature>
<feature type="active site" evidence="2">
    <location>
        <position position="131"/>
    </location>
</feature>
<dbReference type="EC" id="4.3.2.10"/>
<dbReference type="EMBL" id="AE002098">
    <property type="protein sequence ID" value="AAF41053.1"/>
    <property type="molecule type" value="Genomic_DNA"/>
</dbReference>
<dbReference type="PIR" id="H81176">
    <property type="entry name" value="H81176"/>
</dbReference>
<dbReference type="RefSeq" id="NP_273671.1">
    <property type="nucleotide sequence ID" value="NC_003112.2"/>
</dbReference>
<dbReference type="RefSeq" id="WP_002222827.1">
    <property type="nucleotide sequence ID" value="NC_003112.2"/>
</dbReference>
<dbReference type="SMR" id="Q9K0H4"/>
<dbReference type="FunCoup" id="Q9K0H4">
    <property type="interactions" value="523"/>
</dbReference>
<dbReference type="STRING" id="122586.NMB0628"/>
<dbReference type="PaxDb" id="122586-NMB0628"/>
<dbReference type="GeneID" id="61223645"/>
<dbReference type="KEGG" id="nme:NMB0628"/>
<dbReference type="PATRIC" id="fig|122586.8.peg.796"/>
<dbReference type="HOGENOM" id="CLU_048577_4_0_4"/>
<dbReference type="InParanoid" id="Q9K0H4"/>
<dbReference type="OrthoDB" id="9781903at2"/>
<dbReference type="UniPathway" id="UPA00031">
    <property type="reaction ID" value="UER00010"/>
</dbReference>
<dbReference type="Proteomes" id="UP000000425">
    <property type="component" value="Chromosome"/>
</dbReference>
<dbReference type="GO" id="GO:0005737">
    <property type="term" value="C:cytoplasm"/>
    <property type="evidence" value="ECO:0007669"/>
    <property type="project" value="UniProtKB-SubCell"/>
</dbReference>
<dbReference type="GO" id="GO:0000107">
    <property type="term" value="F:imidazoleglycerol-phosphate synthase activity"/>
    <property type="evidence" value="ECO:0000318"/>
    <property type="project" value="GO_Central"/>
</dbReference>
<dbReference type="GO" id="GO:0016829">
    <property type="term" value="F:lyase activity"/>
    <property type="evidence" value="ECO:0007669"/>
    <property type="project" value="UniProtKB-KW"/>
</dbReference>
<dbReference type="GO" id="GO:0000105">
    <property type="term" value="P:L-histidine biosynthetic process"/>
    <property type="evidence" value="ECO:0007669"/>
    <property type="project" value="UniProtKB-UniRule"/>
</dbReference>
<dbReference type="CDD" id="cd04731">
    <property type="entry name" value="HisF"/>
    <property type="match status" value="1"/>
</dbReference>
<dbReference type="FunFam" id="3.20.20.70:FF:000006">
    <property type="entry name" value="Imidazole glycerol phosphate synthase subunit HisF"/>
    <property type="match status" value="1"/>
</dbReference>
<dbReference type="Gene3D" id="3.20.20.70">
    <property type="entry name" value="Aldolase class I"/>
    <property type="match status" value="1"/>
</dbReference>
<dbReference type="HAMAP" id="MF_01013">
    <property type="entry name" value="HisF"/>
    <property type="match status" value="1"/>
</dbReference>
<dbReference type="InterPro" id="IPR013785">
    <property type="entry name" value="Aldolase_TIM"/>
</dbReference>
<dbReference type="InterPro" id="IPR006062">
    <property type="entry name" value="His_biosynth"/>
</dbReference>
<dbReference type="InterPro" id="IPR004651">
    <property type="entry name" value="HisF"/>
</dbReference>
<dbReference type="InterPro" id="IPR050064">
    <property type="entry name" value="IGPS_HisA/HisF"/>
</dbReference>
<dbReference type="InterPro" id="IPR011060">
    <property type="entry name" value="RibuloseP-bd_barrel"/>
</dbReference>
<dbReference type="NCBIfam" id="TIGR00735">
    <property type="entry name" value="hisF"/>
    <property type="match status" value="1"/>
</dbReference>
<dbReference type="PANTHER" id="PTHR21235:SF2">
    <property type="entry name" value="IMIDAZOLE GLYCEROL PHOSPHATE SYNTHASE HISHF"/>
    <property type="match status" value="1"/>
</dbReference>
<dbReference type="PANTHER" id="PTHR21235">
    <property type="entry name" value="IMIDAZOLE GLYCEROL PHOSPHATE SYNTHASE SUBUNIT HISF/H IGP SYNTHASE SUBUNIT HISF/H"/>
    <property type="match status" value="1"/>
</dbReference>
<dbReference type="Pfam" id="PF00977">
    <property type="entry name" value="His_biosynth"/>
    <property type="match status" value="1"/>
</dbReference>
<dbReference type="SUPFAM" id="SSF51366">
    <property type="entry name" value="Ribulose-phoshate binding barrel"/>
    <property type="match status" value="1"/>
</dbReference>
<sequence length="255" mass="27001">MALAKRIIPCLDVKDGRVVKGVNFIGLRDAGDPVEAAKRYNGEGADELTFLDITASSDNRDTILHIIEEVAGQVFIPLTVGGGVRTVADIRRLLNAGADKVSINTAAVTRPDLIDEAAGFFGSQAIVAAVDAKAANPENTRWEIFTHGGRNPTGLDAVEWAVEMQKRGAGEILLTGMDRDGTKQGFNLPLTRAVAEAVDIPVIASGGVGNVRHLIEGITEGKADAVLAAGIFHFGEIAIREAKRAMREAGIEVRL</sequence>